<gene>
    <name evidence="1" type="primary">engB</name>
    <name type="ordered locus">XF_1430</name>
</gene>
<name>ENGB_XYLFA</name>
<keyword id="KW-0131">Cell cycle</keyword>
<keyword id="KW-0132">Cell division</keyword>
<keyword id="KW-0342">GTP-binding</keyword>
<keyword id="KW-0460">Magnesium</keyword>
<keyword id="KW-0479">Metal-binding</keyword>
<keyword id="KW-0547">Nucleotide-binding</keyword>
<keyword id="KW-0717">Septation</keyword>
<reference key="1">
    <citation type="journal article" date="2000" name="Nature">
        <title>The genome sequence of the plant pathogen Xylella fastidiosa.</title>
        <authorList>
            <person name="Simpson A.J.G."/>
            <person name="Reinach F.C."/>
            <person name="Arruda P."/>
            <person name="Abreu F.A."/>
            <person name="Acencio M."/>
            <person name="Alvarenga R."/>
            <person name="Alves L.M.C."/>
            <person name="Araya J.E."/>
            <person name="Baia G.S."/>
            <person name="Baptista C.S."/>
            <person name="Barros M.H."/>
            <person name="Bonaccorsi E.D."/>
            <person name="Bordin S."/>
            <person name="Bove J.M."/>
            <person name="Briones M.R.S."/>
            <person name="Bueno M.R.P."/>
            <person name="Camargo A.A."/>
            <person name="Camargo L.E.A."/>
            <person name="Carraro D.M."/>
            <person name="Carrer H."/>
            <person name="Colauto N.B."/>
            <person name="Colombo C."/>
            <person name="Costa F.F."/>
            <person name="Costa M.C.R."/>
            <person name="Costa-Neto C.M."/>
            <person name="Coutinho L.L."/>
            <person name="Cristofani M."/>
            <person name="Dias-Neto E."/>
            <person name="Docena C."/>
            <person name="El-Dorry H."/>
            <person name="Facincani A.P."/>
            <person name="Ferreira A.J.S."/>
            <person name="Ferreira V.C.A."/>
            <person name="Ferro J.A."/>
            <person name="Fraga J.S."/>
            <person name="Franca S.C."/>
            <person name="Franco M.C."/>
            <person name="Frohme M."/>
            <person name="Furlan L.R."/>
            <person name="Garnier M."/>
            <person name="Goldman G.H."/>
            <person name="Goldman M.H.S."/>
            <person name="Gomes S.L."/>
            <person name="Gruber A."/>
            <person name="Ho P.L."/>
            <person name="Hoheisel J.D."/>
            <person name="Junqueira M.L."/>
            <person name="Kemper E.L."/>
            <person name="Kitajima J.P."/>
            <person name="Krieger J.E."/>
            <person name="Kuramae E.E."/>
            <person name="Laigret F."/>
            <person name="Lambais M.R."/>
            <person name="Leite L.C.C."/>
            <person name="Lemos E.G.M."/>
            <person name="Lemos M.V.F."/>
            <person name="Lopes S.A."/>
            <person name="Lopes C.R."/>
            <person name="Machado J.A."/>
            <person name="Machado M.A."/>
            <person name="Madeira A.M.B.N."/>
            <person name="Madeira H.M.F."/>
            <person name="Marino C.L."/>
            <person name="Marques M.V."/>
            <person name="Martins E.A.L."/>
            <person name="Martins E.M.F."/>
            <person name="Matsukuma A.Y."/>
            <person name="Menck C.F.M."/>
            <person name="Miracca E.C."/>
            <person name="Miyaki C.Y."/>
            <person name="Monteiro-Vitorello C.B."/>
            <person name="Moon D.H."/>
            <person name="Nagai M.A."/>
            <person name="Nascimento A.L.T.O."/>
            <person name="Netto L.E.S."/>
            <person name="Nhani A. Jr."/>
            <person name="Nobrega F.G."/>
            <person name="Nunes L.R."/>
            <person name="Oliveira M.A."/>
            <person name="de Oliveira M.C."/>
            <person name="de Oliveira R.C."/>
            <person name="Palmieri D.A."/>
            <person name="Paris A."/>
            <person name="Peixoto B.R."/>
            <person name="Pereira G.A.G."/>
            <person name="Pereira H.A. Jr."/>
            <person name="Pesquero J.B."/>
            <person name="Quaggio R.B."/>
            <person name="Roberto P.G."/>
            <person name="Rodrigues V."/>
            <person name="de Rosa A.J.M."/>
            <person name="de Rosa V.E. Jr."/>
            <person name="de Sa R.G."/>
            <person name="Santelli R.V."/>
            <person name="Sawasaki H.E."/>
            <person name="da Silva A.C.R."/>
            <person name="da Silva A.M."/>
            <person name="da Silva F.R."/>
            <person name="Silva W.A. Jr."/>
            <person name="da Silveira J.F."/>
            <person name="Silvestri M.L.Z."/>
            <person name="Siqueira W.J."/>
            <person name="de Souza A.A."/>
            <person name="de Souza A.P."/>
            <person name="Terenzi M.F."/>
            <person name="Truffi D."/>
            <person name="Tsai S.M."/>
            <person name="Tsuhako M.H."/>
            <person name="Vallada H."/>
            <person name="Van Sluys M.A."/>
            <person name="Verjovski-Almeida S."/>
            <person name="Vettore A.L."/>
            <person name="Zago M.A."/>
            <person name="Zatz M."/>
            <person name="Meidanis J."/>
            <person name="Setubal J.C."/>
        </authorList>
    </citation>
    <scope>NUCLEOTIDE SEQUENCE [LARGE SCALE GENOMIC DNA]</scope>
    <source>
        <strain>9a5c</strain>
    </source>
</reference>
<organism>
    <name type="scientific">Xylella fastidiosa (strain 9a5c)</name>
    <dbReference type="NCBI Taxonomy" id="160492"/>
    <lineage>
        <taxon>Bacteria</taxon>
        <taxon>Pseudomonadati</taxon>
        <taxon>Pseudomonadota</taxon>
        <taxon>Gammaproteobacteria</taxon>
        <taxon>Lysobacterales</taxon>
        <taxon>Lysobacteraceae</taxon>
        <taxon>Xylella</taxon>
    </lineage>
</organism>
<evidence type="ECO:0000255" key="1">
    <source>
        <dbReference type="HAMAP-Rule" id="MF_00321"/>
    </source>
</evidence>
<evidence type="ECO:0000305" key="2"/>
<comment type="function">
    <text evidence="1">Necessary for normal cell division and for the maintenance of normal septation.</text>
</comment>
<comment type="cofactor">
    <cofactor evidence="1">
        <name>Mg(2+)</name>
        <dbReference type="ChEBI" id="CHEBI:18420"/>
    </cofactor>
</comment>
<comment type="similarity">
    <text evidence="1">Belongs to the TRAFAC class TrmE-Era-EngA-EngB-Septin-like GTPase superfamily. EngB GTPase family.</text>
</comment>
<comment type="sequence caution" evidence="2">
    <conflict type="erroneous initiation">
        <sequence resource="EMBL-CDS" id="AAF84239"/>
    </conflict>
</comment>
<sequence length="203" mass="22882">MSSPLECAKYLLSAHTTHQLPADDGSEVAFAGRSNAGKSSVLNTLTRQNALARVSKTPGRTQQLVYFTVTPQRYLVDLPGYGYAKVPKELQIHWQTFIDSYFHQRQALRGLVVVMDIRHPLKEYDLQMLAYARQRGLPAQALLTKADKLGRGQQAQTLQKVRNELTKHFADHINIQTFSSKSRQGVEQLHTVIETWLGLARLA</sequence>
<dbReference type="EMBL" id="AE003849">
    <property type="protein sequence ID" value="AAF84239.1"/>
    <property type="status" value="ALT_INIT"/>
    <property type="molecule type" value="Genomic_DNA"/>
</dbReference>
<dbReference type="PIR" id="E82682">
    <property type="entry name" value="E82682"/>
</dbReference>
<dbReference type="SMR" id="Q9PDE9"/>
<dbReference type="STRING" id="160492.XF_1430"/>
<dbReference type="KEGG" id="xfa:XF_1430"/>
<dbReference type="eggNOG" id="COG0218">
    <property type="taxonomic scope" value="Bacteria"/>
</dbReference>
<dbReference type="HOGENOM" id="CLU_033732_1_0_6"/>
<dbReference type="Proteomes" id="UP000000812">
    <property type="component" value="Chromosome"/>
</dbReference>
<dbReference type="GO" id="GO:0005829">
    <property type="term" value="C:cytosol"/>
    <property type="evidence" value="ECO:0007669"/>
    <property type="project" value="TreeGrafter"/>
</dbReference>
<dbReference type="GO" id="GO:0005525">
    <property type="term" value="F:GTP binding"/>
    <property type="evidence" value="ECO:0007669"/>
    <property type="project" value="UniProtKB-UniRule"/>
</dbReference>
<dbReference type="GO" id="GO:0046872">
    <property type="term" value="F:metal ion binding"/>
    <property type="evidence" value="ECO:0007669"/>
    <property type="project" value="UniProtKB-KW"/>
</dbReference>
<dbReference type="GO" id="GO:0000917">
    <property type="term" value="P:division septum assembly"/>
    <property type="evidence" value="ECO:0007669"/>
    <property type="project" value="UniProtKB-KW"/>
</dbReference>
<dbReference type="CDD" id="cd01876">
    <property type="entry name" value="YihA_EngB"/>
    <property type="match status" value="1"/>
</dbReference>
<dbReference type="FunFam" id="3.40.50.300:FF:000098">
    <property type="entry name" value="Probable GTP-binding protein EngB"/>
    <property type="match status" value="1"/>
</dbReference>
<dbReference type="Gene3D" id="3.40.50.300">
    <property type="entry name" value="P-loop containing nucleotide triphosphate hydrolases"/>
    <property type="match status" value="1"/>
</dbReference>
<dbReference type="HAMAP" id="MF_00321">
    <property type="entry name" value="GTPase_EngB"/>
    <property type="match status" value="1"/>
</dbReference>
<dbReference type="InterPro" id="IPR030393">
    <property type="entry name" value="G_ENGB_dom"/>
</dbReference>
<dbReference type="InterPro" id="IPR006073">
    <property type="entry name" value="GTP-bd"/>
</dbReference>
<dbReference type="InterPro" id="IPR019987">
    <property type="entry name" value="GTP-bd_ribosome_bio_YsxC"/>
</dbReference>
<dbReference type="InterPro" id="IPR027417">
    <property type="entry name" value="P-loop_NTPase"/>
</dbReference>
<dbReference type="NCBIfam" id="TIGR03598">
    <property type="entry name" value="GTPase_YsxC"/>
    <property type="match status" value="1"/>
</dbReference>
<dbReference type="PANTHER" id="PTHR11649:SF13">
    <property type="entry name" value="ENGB-TYPE G DOMAIN-CONTAINING PROTEIN"/>
    <property type="match status" value="1"/>
</dbReference>
<dbReference type="PANTHER" id="PTHR11649">
    <property type="entry name" value="MSS1/TRME-RELATED GTP-BINDING PROTEIN"/>
    <property type="match status" value="1"/>
</dbReference>
<dbReference type="Pfam" id="PF01926">
    <property type="entry name" value="MMR_HSR1"/>
    <property type="match status" value="1"/>
</dbReference>
<dbReference type="SUPFAM" id="SSF52540">
    <property type="entry name" value="P-loop containing nucleoside triphosphate hydrolases"/>
    <property type="match status" value="1"/>
</dbReference>
<dbReference type="PROSITE" id="PS51706">
    <property type="entry name" value="G_ENGB"/>
    <property type="match status" value="1"/>
</dbReference>
<proteinExistence type="inferred from homology"/>
<feature type="chain" id="PRO_0000157804" description="Probable GTP-binding protein EngB">
    <location>
        <begin position="1"/>
        <end position="203"/>
    </location>
</feature>
<feature type="domain" description="EngB-type G" evidence="1">
    <location>
        <begin position="24"/>
        <end position="199"/>
    </location>
</feature>
<feature type="binding site" evidence="1">
    <location>
        <begin position="32"/>
        <end position="39"/>
    </location>
    <ligand>
        <name>GTP</name>
        <dbReference type="ChEBI" id="CHEBI:37565"/>
    </ligand>
</feature>
<feature type="binding site" evidence="1">
    <location>
        <position position="39"/>
    </location>
    <ligand>
        <name>Mg(2+)</name>
        <dbReference type="ChEBI" id="CHEBI:18420"/>
    </ligand>
</feature>
<feature type="binding site" evidence="1">
    <location>
        <begin position="59"/>
        <end position="63"/>
    </location>
    <ligand>
        <name>GTP</name>
        <dbReference type="ChEBI" id="CHEBI:37565"/>
    </ligand>
</feature>
<feature type="binding site" evidence="1">
    <location>
        <position position="61"/>
    </location>
    <ligand>
        <name>Mg(2+)</name>
        <dbReference type="ChEBI" id="CHEBI:18420"/>
    </ligand>
</feature>
<feature type="binding site" evidence="1">
    <location>
        <begin position="77"/>
        <end position="80"/>
    </location>
    <ligand>
        <name>GTP</name>
        <dbReference type="ChEBI" id="CHEBI:37565"/>
    </ligand>
</feature>
<feature type="binding site" evidence="1">
    <location>
        <begin position="144"/>
        <end position="147"/>
    </location>
    <ligand>
        <name>GTP</name>
        <dbReference type="ChEBI" id="CHEBI:37565"/>
    </ligand>
</feature>
<feature type="binding site" evidence="1">
    <location>
        <begin position="178"/>
        <end position="180"/>
    </location>
    <ligand>
        <name>GTP</name>
        <dbReference type="ChEBI" id="CHEBI:37565"/>
    </ligand>
</feature>
<accession>Q9PDE9</accession>
<protein>
    <recommendedName>
        <fullName evidence="1">Probable GTP-binding protein EngB</fullName>
    </recommendedName>
</protein>